<reference key="1">
    <citation type="journal article" date="2002" name="Mol. Phylogenet. Evol.">
        <title>Phylogenetics of asterids based on 3 coding and 3 non-coding chloroplast DNA markers and the utility of non-coding DNA at higher taxonomic levels.</title>
        <authorList>
            <person name="Bremer B."/>
            <person name="Bremer K."/>
            <person name="Heidari N."/>
            <person name="Erixon P."/>
            <person name="Olmstead R.G."/>
            <person name="Anderberg A.A."/>
            <person name="Kallersjo M."/>
            <person name="Barkhordarian E."/>
        </authorList>
    </citation>
    <scope>NUCLEOTIDE SEQUENCE [GENOMIC DNA]</scope>
</reference>
<dbReference type="EMBL" id="AJ429344">
    <property type="protein sequence ID" value="CAD22240.1"/>
    <property type="molecule type" value="Genomic_DNA"/>
</dbReference>
<dbReference type="GO" id="GO:0009507">
    <property type="term" value="C:chloroplast"/>
    <property type="evidence" value="ECO:0007669"/>
    <property type="project" value="UniProtKB-SubCell"/>
</dbReference>
<dbReference type="GO" id="GO:0003723">
    <property type="term" value="F:RNA binding"/>
    <property type="evidence" value="ECO:0007669"/>
    <property type="project" value="UniProtKB-KW"/>
</dbReference>
<dbReference type="GO" id="GO:0006397">
    <property type="term" value="P:mRNA processing"/>
    <property type="evidence" value="ECO:0007669"/>
    <property type="project" value="UniProtKB-KW"/>
</dbReference>
<dbReference type="GO" id="GO:0008380">
    <property type="term" value="P:RNA splicing"/>
    <property type="evidence" value="ECO:0007669"/>
    <property type="project" value="UniProtKB-UniRule"/>
</dbReference>
<dbReference type="GO" id="GO:0008033">
    <property type="term" value="P:tRNA processing"/>
    <property type="evidence" value="ECO:0007669"/>
    <property type="project" value="UniProtKB-KW"/>
</dbReference>
<dbReference type="HAMAP" id="MF_01390">
    <property type="entry name" value="MatK"/>
    <property type="match status" value="1"/>
</dbReference>
<dbReference type="InterPro" id="IPR024937">
    <property type="entry name" value="Domain_X"/>
</dbReference>
<dbReference type="InterPro" id="IPR002866">
    <property type="entry name" value="Maturase_MatK"/>
</dbReference>
<dbReference type="InterPro" id="IPR024942">
    <property type="entry name" value="Maturase_MatK_N"/>
</dbReference>
<dbReference type="PANTHER" id="PTHR34811">
    <property type="entry name" value="MATURASE K"/>
    <property type="match status" value="1"/>
</dbReference>
<dbReference type="PANTHER" id="PTHR34811:SF1">
    <property type="entry name" value="MATURASE K"/>
    <property type="match status" value="1"/>
</dbReference>
<dbReference type="Pfam" id="PF01348">
    <property type="entry name" value="Intron_maturas2"/>
    <property type="match status" value="1"/>
</dbReference>
<dbReference type="Pfam" id="PF01824">
    <property type="entry name" value="MatK_N"/>
    <property type="match status" value="1"/>
</dbReference>
<organism>
    <name type="scientific">Plantago argentea</name>
    <name type="common">Silver plantain</name>
    <dbReference type="NCBI Taxonomy" id="185776"/>
    <lineage>
        <taxon>Eukaryota</taxon>
        <taxon>Viridiplantae</taxon>
        <taxon>Streptophyta</taxon>
        <taxon>Embryophyta</taxon>
        <taxon>Tracheophyta</taxon>
        <taxon>Spermatophyta</taxon>
        <taxon>Magnoliopsida</taxon>
        <taxon>eudicotyledons</taxon>
        <taxon>Gunneridae</taxon>
        <taxon>Pentapetalae</taxon>
        <taxon>asterids</taxon>
        <taxon>lamiids</taxon>
        <taxon>Lamiales</taxon>
        <taxon>Plantaginaceae</taxon>
        <taxon>Plantagineae</taxon>
        <taxon>Plantago</taxon>
    </lineage>
</organism>
<keyword id="KW-0150">Chloroplast</keyword>
<keyword id="KW-0507">mRNA processing</keyword>
<keyword id="KW-0934">Plastid</keyword>
<keyword id="KW-0694">RNA-binding</keyword>
<keyword id="KW-0819">tRNA processing</keyword>
<accession>Q8M986</accession>
<feature type="chain" id="PRO_0000143641" description="Maturase K">
    <location>
        <begin position="1"/>
        <end position="514"/>
    </location>
</feature>
<geneLocation type="chloroplast"/>
<protein>
    <recommendedName>
        <fullName evidence="1">Maturase K</fullName>
    </recommendedName>
    <alternativeName>
        <fullName evidence="1">Intron maturase</fullName>
    </alternativeName>
</protein>
<gene>
    <name evidence="1" type="primary">matK</name>
</gene>
<comment type="function">
    <text evidence="1">Usually encoded in the trnK tRNA gene intron. Probably assists in splicing its own and other chloroplast group II introns.</text>
</comment>
<comment type="subcellular location">
    <subcellularLocation>
        <location>Plastid</location>
        <location>Chloroplast</location>
    </subcellularLocation>
</comment>
<comment type="similarity">
    <text evidence="1">Belongs to the intron maturase 2 family. MatK subfamily.</text>
</comment>
<name>MATK_PLAAE</name>
<evidence type="ECO:0000255" key="1">
    <source>
        <dbReference type="HAMAP-Rule" id="MF_01390"/>
    </source>
</evidence>
<proteinExistence type="inferred from homology"/>
<sequence>MEEIQRDLQLERSRQQDFLYPLIFQEYIYAFAHDRSLSRSFLSENPDSENQVYENKSSLLIVKRLITRMHKQNHFLISTNDSKKNLFLGRNKDLDSLILLEGFAFIVEIPYSLRLISSLEGKRKKIEKSQTLRSIHSIFPFLEDNFSHLNFVLDILIPYPVHAEILVQTLRYWVKDAPSLHFLRXXLNDYWSLSTPKKAGLKRNQRFFLFLYNSHVCEYESIFVFLRNQSSHLQSLSFGVLLERIYFYGKIECLGSVFLKVTDCQANLWLVKEPCMHYVRYQRKCILSSKGTSLFMNKWKCYLATFWQWHFSLWFHPRRISTNPLYNHLLEFVGYLSSARMHPAMVRSQILENSFLINNAIKKVDALIPIMPMVTSLAKAQFCNLLGHPTSKPVWADLSDSNIINRFGHICRNISHYYSGSSKKKSLYRIKYILRLSCARTLARKHKSTVRTFLKTAGSGFLEEFLMSEEDLLCWTFPKASSALWGVYKSRIWHLDIIWINDLANHKKNLRPWK</sequence>